<evidence type="ECO:0000255" key="1">
    <source>
        <dbReference type="HAMAP-Rule" id="MF_00011"/>
    </source>
</evidence>
<reference key="1">
    <citation type="journal article" date="2009" name="Appl. Environ. Microbiol.">
        <title>Three genomes from the phylum Acidobacteria provide insight into the lifestyles of these microorganisms in soils.</title>
        <authorList>
            <person name="Ward N.L."/>
            <person name="Challacombe J.F."/>
            <person name="Janssen P.H."/>
            <person name="Henrissat B."/>
            <person name="Coutinho P.M."/>
            <person name="Wu M."/>
            <person name="Xie G."/>
            <person name="Haft D.H."/>
            <person name="Sait M."/>
            <person name="Badger J."/>
            <person name="Barabote R.D."/>
            <person name="Bradley B."/>
            <person name="Brettin T.S."/>
            <person name="Brinkac L.M."/>
            <person name="Bruce D."/>
            <person name="Creasy T."/>
            <person name="Daugherty S.C."/>
            <person name="Davidsen T.M."/>
            <person name="DeBoy R.T."/>
            <person name="Detter J.C."/>
            <person name="Dodson R.J."/>
            <person name="Durkin A.S."/>
            <person name="Ganapathy A."/>
            <person name="Gwinn-Giglio M."/>
            <person name="Han C.S."/>
            <person name="Khouri H."/>
            <person name="Kiss H."/>
            <person name="Kothari S.P."/>
            <person name="Madupu R."/>
            <person name="Nelson K.E."/>
            <person name="Nelson W.C."/>
            <person name="Paulsen I."/>
            <person name="Penn K."/>
            <person name="Ren Q."/>
            <person name="Rosovitz M.J."/>
            <person name="Selengut J.D."/>
            <person name="Shrivastava S."/>
            <person name="Sullivan S.A."/>
            <person name="Tapia R."/>
            <person name="Thompson L.S."/>
            <person name="Watkins K.L."/>
            <person name="Yang Q."/>
            <person name="Yu C."/>
            <person name="Zafar N."/>
            <person name="Zhou L."/>
            <person name="Kuske C.R."/>
        </authorList>
    </citation>
    <scope>NUCLEOTIDE SEQUENCE [LARGE SCALE GENOMIC DNA]</scope>
    <source>
        <strain>Ellin345</strain>
    </source>
</reference>
<accession>Q1IJT2</accession>
<organism>
    <name type="scientific">Koribacter versatilis (strain Ellin345)</name>
    <dbReference type="NCBI Taxonomy" id="204669"/>
    <lineage>
        <taxon>Bacteria</taxon>
        <taxon>Pseudomonadati</taxon>
        <taxon>Acidobacteriota</taxon>
        <taxon>Terriglobia</taxon>
        <taxon>Terriglobales</taxon>
        <taxon>Candidatus Korobacteraceae</taxon>
        <taxon>Candidatus Korobacter</taxon>
    </lineage>
</organism>
<comment type="function">
    <text evidence="1">Plays an important role in the de novo pathway of purine nucleotide biosynthesis. Catalyzes the first committed step in the biosynthesis of AMP from IMP.</text>
</comment>
<comment type="catalytic activity">
    <reaction evidence="1">
        <text>IMP + L-aspartate + GTP = N(6)-(1,2-dicarboxyethyl)-AMP + GDP + phosphate + 2 H(+)</text>
        <dbReference type="Rhea" id="RHEA:15753"/>
        <dbReference type="ChEBI" id="CHEBI:15378"/>
        <dbReference type="ChEBI" id="CHEBI:29991"/>
        <dbReference type="ChEBI" id="CHEBI:37565"/>
        <dbReference type="ChEBI" id="CHEBI:43474"/>
        <dbReference type="ChEBI" id="CHEBI:57567"/>
        <dbReference type="ChEBI" id="CHEBI:58053"/>
        <dbReference type="ChEBI" id="CHEBI:58189"/>
        <dbReference type="EC" id="6.3.4.4"/>
    </reaction>
</comment>
<comment type="cofactor">
    <cofactor evidence="1">
        <name>Mg(2+)</name>
        <dbReference type="ChEBI" id="CHEBI:18420"/>
    </cofactor>
    <text evidence="1">Binds 1 Mg(2+) ion per subunit.</text>
</comment>
<comment type="pathway">
    <text evidence="1">Purine metabolism; AMP biosynthesis via de novo pathway; AMP from IMP: step 1/2.</text>
</comment>
<comment type="subunit">
    <text evidence="1">Homodimer.</text>
</comment>
<comment type="subcellular location">
    <subcellularLocation>
        <location evidence="1">Cytoplasm</location>
    </subcellularLocation>
</comment>
<comment type="similarity">
    <text evidence="1">Belongs to the adenylosuccinate synthetase family.</text>
</comment>
<keyword id="KW-0963">Cytoplasm</keyword>
<keyword id="KW-0342">GTP-binding</keyword>
<keyword id="KW-0436">Ligase</keyword>
<keyword id="KW-0460">Magnesium</keyword>
<keyword id="KW-0479">Metal-binding</keyword>
<keyword id="KW-0547">Nucleotide-binding</keyword>
<keyword id="KW-0658">Purine biosynthesis</keyword>
<keyword id="KW-1185">Reference proteome</keyword>
<protein>
    <recommendedName>
        <fullName evidence="1">Adenylosuccinate synthetase</fullName>
        <shortName evidence="1">AMPSase</shortName>
        <shortName evidence="1">AdSS</shortName>
        <ecNumber evidence="1">6.3.4.4</ecNumber>
    </recommendedName>
    <alternativeName>
        <fullName evidence="1">IMP--aspartate ligase</fullName>
    </alternativeName>
</protein>
<feature type="chain" id="PRO_0000321789" description="Adenylosuccinate synthetase">
    <location>
        <begin position="1"/>
        <end position="442"/>
    </location>
</feature>
<feature type="active site" description="Proton acceptor" evidence="1">
    <location>
        <position position="17"/>
    </location>
</feature>
<feature type="active site" description="Proton donor" evidence="1">
    <location>
        <position position="45"/>
    </location>
</feature>
<feature type="binding site" evidence="1">
    <location>
        <begin position="16"/>
        <end position="22"/>
    </location>
    <ligand>
        <name>GTP</name>
        <dbReference type="ChEBI" id="CHEBI:37565"/>
    </ligand>
</feature>
<feature type="binding site" description="in other chain" evidence="1">
    <location>
        <begin position="17"/>
        <end position="20"/>
    </location>
    <ligand>
        <name>IMP</name>
        <dbReference type="ChEBI" id="CHEBI:58053"/>
        <note>ligand shared between dimeric partners</note>
    </ligand>
</feature>
<feature type="binding site" evidence="1">
    <location>
        <position position="17"/>
    </location>
    <ligand>
        <name>Mg(2+)</name>
        <dbReference type="ChEBI" id="CHEBI:18420"/>
    </ligand>
</feature>
<feature type="binding site" description="in other chain" evidence="1">
    <location>
        <begin position="42"/>
        <end position="45"/>
    </location>
    <ligand>
        <name>IMP</name>
        <dbReference type="ChEBI" id="CHEBI:58053"/>
        <note>ligand shared between dimeric partners</note>
    </ligand>
</feature>
<feature type="binding site" evidence="1">
    <location>
        <begin position="44"/>
        <end position="46"/>
    </location>
    <ligand>
        <name>GTP</name>
        <dbReference type="ChEBI" id="CHEBI:37565"/>
    </ligand>
</feature>
<feature type="binding site" evidence="1">
    <location>
        <position position="44"/>
    </location>
    <ligand>
        <name>Mg(2+)</name>
        <dbReference type="ChEBI" id="CHEBI:18420"/>
    </ligand>
</feature>
<feature type="binding site" description="in other chain" evidence="1">
    <location>
        <position position="133"/>
    </location>
    <ligand>
        <name>IMP</name>
        <dbReference type="ChEBI" id="CHEBI:58053"/>
        <note>ligand shared between dimeric partners</note>
    </ligand>
</feature>
<feature type="binding site" evidence="1">
    <location>
        <position position="147"/>
    </location>
    <ligand>
        <name>IMP</name>
        <dbReference type="ChEBI" id="CHEBI:58053"/>
        <note>ligand shared between dimeric partners</note>
    </ligand>
</feature>
<feature type="binding site" description="in other chain" evidence="1">
    <location>
        <position position="228"/>
    </location>
    <ligand>
        <name>IMP</name>
        <dbReference type="ChEBI" id="CHEBI:58053"/>
        <note>ligand shared between dimeric partners</note>
    </ligand>
</feature>
<feature type="binding site" description="in other chain" evidence="1">
    <location>
        <position position="243"/>
    </location>
    <ligand>
        <name>IMP</name>
        <dbReference type="ChEBI" id="CHEBI:58053"/>
        <note>ligand shared between dimeric partners</note>
    </ligand>
</feature>
<feature type="binding site" evidence="1">
    <location>
        <begin position="303"/>
        <end position="309"/>
    </location>
    <ligand>
        <name>substrate</name>
    </ligand>
</feature>
<feature type="binding site" description="in other chain" evidence="1">
    <location>
        <position position="307"/>
    </location>
    <ligand>
        <name>IMP</name>
        <dbReference type="ChEBI" id="CHEBI:58053"/>
        <note>ligand shared between dimeric partners</note>
    </ligand>
</feature>
<feature type="binding site" evidence="1">
    <location>
        <position position="309"/>
    </location>
    <ligand>
        <name>GTP</name>
        <dbReference type="ChEBI" id="CHEBI:37565"/>
    </ligand>
</feature>
<feature type="binding site" evidence="1">
    <location>
        <begin position="335"/>
        <end position="337"/>
    </location>
    <ligand>
        <name>GTP</name>
        <dbReference type="ChEBI" id="CHEBI:37565"/>
    </ligand>
</feature>
<feature type="binding site" evidence="1">
    <location>
        <begin position="417"/>
        <end position="419"/>
    </location>
    <ligand>
        <name>GTP</name>
        <dbReference type="ChEBI" id="CHEBI:37565"/>
    </ligand>
</feature>
<gene>
    <name evidence="1" type="primary">purA</name>
    <name type="ordered locus">Acid345_3868</name>
</gene>
<dbReference type="EC" id="6.3.4.4" evidence="1"/>
<dbReference type="EMBL" id="CP000360">
    <property type="protein sequence ID" value="ABF42868.1"/>
    <property type="molecule type" value="Genomic_DNA"/>
</dbReference>
<dbReference type="RefSeq" id="WP_011524667.1">
    <property type="nucleotide sequence ID" value="NC_008009.1"/>
</dbReference>
<dbReference type="SMR" id="Q1IJT2"/>
<dbReference type="STRING" id="204669.Acid345_3868"/>
<dbReference type="EnsemblBacteria" id="ABF42868">
    <property type="protein sequence ID" value="ABF42868"/>
    <property type="gene ID" value="Acid345_3868"/>
</dbReference>
<dbReference type="KEGG" id="aba:Acid345_3868"/>
<dbReference type="eggNOG" id="COG0104">
    <property type="taxonomic scope" value="Bacteria"/>
</dbReference>
<dbReference type="HOGENOM" id="CLU_029848_0_0_0"/>
<dbReference type="OrthoDB" id="9807553at2"/>
<dbReference type="UniPathway" id="UPA00075">
    <property type="reaction ID" value="UER00335"/>
</dbReference>
<dbReference type="Proteomes" id="UP000002432">
    <property type="component" value="Chromosome"/>
</dbReference>
<dbReference type="GO" id="GO:0005737">
    <property type="term" value="C:cytoplasm"/>
    <property type="evidence" value="ECO:0007669"/>
    <property type="project" value="UniProtKB-SubCell"/>
</dbReference>
<dbReference type="GO" id="GO:0004019">
    <property type="term" value="F:adenylosuccinate synthase activity"/>
    <property type="evidence" value="ECO:0007669"/>
    <property type="project" value="UniProtKB-UniRule"/>
</dbReference>
<dbReference type="GO" id="GO:0005525">
    <property type="term" value="F:GTP binding"/>
    <property type="evidence" value="ECO:0007669"/>
    <property type="project" value="UniProtKB-UniRule"/>
</dbReference>
<dbReference type="GO" id="GO:0000287">
    <property type="term" value="F:magnesium ion binding"/>
    <property type="evidence" value="ECO:0007669"/>
    <property type="project" value="UniProtKB-UniRule"/>
</dbReference>
<dbReference type="GO" id="GO:0044208">
    <property type="term" value="P:'de novo' AMP biosynthetic process"/>
    <property type="evidence" value="ECO:0007669"/>
    <property type="project" value="UniProtKB-UniRule"/>
</dbReference>
<dbReference type="GO" id="GO:0046040">
    <property type="term" value="P:IMP metabolic process"/>
    <property type="evidence" value="ECO:0007669"/>
    <property type="project" value="TreeGrafter"/>
</dbReference>
<dbReference type="CDD" id="cd03108">
    <property type="entry name" value="AdSS"/>
    <property type="match status" value="1"/>
</dbReference>
<dbReference type="FunFam" id="1.10.300.10:FF:000001">
    <property type="entry name" value="Adenylosuccinate synthetase"/>
    <property type="match status" value="1"/>
</dbReference>
<dbReference type="FunFam" id="3.90.170.10:FF:000001">
    <property type="entry name" value="Adenylosuccinate synthetase"/>
    <property type="match status" value="1"/>
</dbReference>
<dbReference type="Gene3D" id="3.40.440.10">
    <property type="entry name" value="Adenylosuccinate Synthetase, subunit A, domain 1"/>
    <property type="match status" value="1"/>
</dbReference>
<dbReference type="Gene3D" id="1.10.300.10">
    <property type="entry name" value="Adenylosuccinate Synthetase, subunit A, domain 2"/>
    <property type="match status" value="1"/>
</dbReference>
<dbReference type="Gene3D" id="3.90.170.10">
    <property type="entry name" value="Adenylosuccinate Synthetase, subunit A, domain 3"/>
    <property type="match status" value="1"/>
</dbReference>
<dbReference type="HAMAP" id="MF_00011">
    <property type="entry name" value="Adenylosucc_synth"/>
    <property type="match status" value="1"/>
</dbReference>
<dbReference type="InterPro" id="IPR018220">
    <property type="entry name" value="Adenylosuccin_syn_GTP-bd"/>
</dbReference>
<dbReference type="InterPro" id="IPR033128">
    <property type="entry name" value="Adenylosuccin_syn_Lys_AS"/>
</dbReference>
<dbReference type="InterPro" id="IPR042109">
    <property type="entry name" value="Adenylosuccinate_synth_dom1"/>
</dbReference>
<dbReference type="InterPro" id="IPR042110">
    <property type="entry name" value="Adenylosuccinate_synth_dom2"/>
</dbReference>
<dbReference type="InterPro" id="IPR042111">
    <property type="entry name" value="Adenylosuccinate_synth_dom3"/>
</dbReference>
<dbReference type="InterPro" id="IPR001114">
    <property type="entry name" value="Adenylosuccinate_synthetase"/>
</dbReference>
<dbReference type="InterPro" id="IPR027417">
    <property type="entry name" value="P-loop_NTPase"/>
</dbReference>
<dbReference type="NCBIfam" id="NF002223">
    <property type="entry name" value="PRK01117.1"/>
    <property type="match status" value="1"/>
</dbReference>
<dbReference type="NCBIfam" id="TIGR00184">
    <property type="entry name" value="purA"/>
    <property type="match status" value="1"/>
</dbReference>
<dbReference type="PANTHER" id="PTHR11846">
    <property type="entry name" value="ADENYLOSUCCINATE SYNTHETASE"/>
    <property type="match status" value="1"/>
</dbReference>
<dbReference type="PANTHER" id="PTHR11846:SF0">
    <property type="entry name" value="ADENYLOSUCCINATE SYNTHETASE"/>
    <property type="match status" value="1"/>
</dbReference>
<dbReference type="Pfam" id="PF00709">
    <property type="entry name" value="Adenylsucc_synt"/>
    <property type="match status" value="1"/>
</dbReference>
<dbReference type="SMART" id="SM00788">
    <property type="entry name" value="Adenylsucc_synt"/>
    <property type="match status" value="1"/>
</dbReference>
<dbReference type="SUPFAM" id="SSF52540">
    <property type="entry name" value="P-loop containing nucleoside triphosphate hydrolases"/>
    <property type="match status" value="1"/>
</dbReference>
<dbReference type="PROSITE" id="PS01266">
    <property type="entry name" value="ADENYLOSUCCIN_SYN_1"/>
    <property type="match status" value="1"/>
</dbReference>
<dbReference type="PROSITE" id="PS00513">
    <property type="entry name" value="ADENYLOSUCCIN_SYN_2"/>
    <property type="match status" value="1"/>
</dbReference>
<proteinExistence type="inferred from homology"/>
<sequence length="442" mass="47644">MVSKGKTAVVIGAQWGDEGKGKIVDVLSENFRVVARYAGGHNAGHTVLIGGKKFVLQLIPCGVLRPGCRGVIGNGVVLDPIAFLNEVQRLRDLGVAVDGNLFVSSRAHVILPYHRMVELASENAPGRVKIGTTSRGIGPSYEDKMGRRGLRVADLLDSTLLKKHIENACKEKNTIVHALFNAEPIDPDKMYNEYAKAAEKVAPFVTDTAVLLNNAINSGESVMFEGAQGTMLDIDHGTYPFVTSSSATSGGAVIGTGVPPTSISTVIGVTKAYCTRVGEGPFPSELHDAMGDAIRKKGNEFGAVTGRPRRTGWLDLPLLRYSNMINGTEWLVVTKLDVLDELDEIPVATSYKIDGKESEEIPAQGCGFDKIEPIYTKLPGWKTDTTKISKYEDLPAKTKEYLKFVEQQSGAKVGILSTGPDRDQSIYTDAFVNALGLKHLGK</sequence>
<name>PURA_KORVE</name>